<protein>
    <recommendedName>
        <fullName evidence="1">Flagellar L-ring protein</fullName>
    </recommendedName>
    <alternativeName>
        <fullName evidence="1">Basal body L-ring protein</fullName>
    </alternativeName>
</protein>
<name>FLGH_ALIF1</name>
<evidence type="ECO:0000255" key="1">
    <source>
        <dbReference type="HAMAP-Rule" id="MF_00415"/>
    </source>
</evidence>
<evidence type="ECO:0000256" key="2">
    <source>
        <dbReference type="SAM" id="MobiDB-lite"/>
    </source>
</evidence>
<feature type="signal peptide" evidence="1">
    <location>
        <begin position="1"/>
        <end position="15"/>
    </location>
</feature>
<feature type="chain" id="PRO_0000009477" description="Flagellar L-ring protein">
    <location>
        <begin position="16"/>
        <end position="263"/>
    </location>
</feature>
<feature type="region of interest" description="Disordered" evidence="2">
    <location>
        <begin position="123"/>
        <end position="143"/>
    </location>
</feature>
<feature type="lipid moiety-binding region" description="N-palmitoyl cysteine" evidence="1">
    <location>
        <position position="16"/>
    </location>
</feature>
<feature type="lipid moiety-binding region" description="S-diacylglycerol cysteine" evidence="1">
    <location>
        <position position="16"/>
    </location>
</feature>
<organism>
    <name type="scientific">Aliivibrio fischeri (strain ATCC 700601 / ES114)</name>
    <name type="common">Vibrio fischeri</name>
    <dbReference type="NCBI Taxonomy" id="312309"/>
    <lineage>
        <taxon>Bacteria</taxon>
        <taxon>Pseudomonadati</taxon>
        <taxon>Pseudomonadota</taxon>
        <taxon>Gammaproteobacteria</taxon>
        <taxon>Vibrionales</taxon>
        <taxon>Vibrionaceae</taxon>
        <taxon>Aliivibrio</taxon>
    </lineage>
</organism>
<gene>
    <name evidence="1" type="primary">flgH</name>
    <name type="ordered locus">VF_1871</name>
</gene>
<dbReference type="EMBL" id="CP000020">
    <property type="protein sequence ID" value="AAW86366.1"/>
    <property type="molecule type" value="Genomic_DNA"/>
</dbReference>
<dbReference type="RefSeq" id="WP_011262373.1">
    <property type="nucleotide sequence ID" value="NZ_CAWLES010000001.1"/>
</dbReference>
<dbReference type="RefSeq" id="YP_205254.1">
    <property type="nucleotide sequence ID" value="NC_006840.2"/>
</dbReference>
<dbReference type="SMR" id="Q5E3N0"/>
<dbReference type="STRING" id="312309.VF_1871"/>
<dbReference type="EnsemblBacteria" id="AAW86366">
    <property type="protein sequence ID" value="AAW86366"/>
    <property type="gene ID" value="VF_1871"/>
</dbReference>
<dbReference type="GeneID" id="54164569"/>
<dbReference type="KEGG" id="vfi:VF_1871"/>
<dbReference type="PATRIC" id="fig|312309.11.peg.1898"/>
<dbReference type="eggNOG" id="COG2063">
    <property type="taxonomic scope" value="Bacteria"/>
</dbReference>
<dbReference type="HOGENOM" id="CLU_069313_0_2_6"/>
<dbReference type="OrthoDB" id="9789463at2"/>
<dbReference type="Proteomes" id="UP000000537">
    <property type="component" value="Chromosome I"/>
</dbReference>
<dbReference type="GO" id="GO:0009427">
    <property type="term" value="C:bacterial-type flagellum basal body, distal rod, L ring"/>
    <property type="evidence" value="ECO:0007669"/>
    <property type="project" value="InterPro"/>
</dbReference>
<dbReference type="GO" id="GO:0009279">
    <property type="term" value="C:cell outer membrane"/>
    <property type="evidence" value="ECO:0007669"/>
    <property type="project" value="UniProtKB-SubCell"/>
</dbReference>
<dbReference type="GO" id="GO:0003774">
    <property type="term" value="F:cytoskeletal motor activity"/>
    <property type="evidence" value="ECO:0007669"/>
    <property type="project" value="InterPro"/>
</dbReference>
<dbReference type="GO" id="GO:0071973">
    <property type="term" value="P:bacterial-type flagellum-dependent cell motility"/>
    <property type="evidence" value="ECO:0007669"/>
    <property type="project" value="InterPro"/>
</dbReference>
<dbReference type="HAMAP" id="MF_00415">
    <property type="entry name" value="FlgH"/>
    <property type="match status" value="1"/>
</dbReference>
<dbReference type="InterPro" id="IPR000527">
    <property type="entry name" value="Flag_Lring"/>
</dbReference>
<dbReference type="NCBIfam" id="NF001302">
    <property type="entry name" value="PRK00249.1-2"/>
    <property type="match status" value="1"/>
</dbReference>
<dbReference type="PANTHER" id="PTHR34933">
    <property type="entry name" value="FLAGELLAR L-RING PROTEIN"/>
    <property type="match status" value="1"/>
</dbReference>
<dbReference type="PANTHER" id="PTHR34933:SF1">
    <property type="entry name" value="FLAGELLAR L-RING PROTEIN"/>
    <property type="match status" value="1"/>
</dbReference>
<dbReference type="Pfam" id="PF02107">
    <property type="entry name" value="FlgH"/>
    <property type="match status" value="1"/>
</dbReference>
<dbReference type="PRINTS" id="PR01008">
    <property type="entry name" value="FLGLRINGFLGH"/>
</dbReference>
<dbReference type="PROSITE" id="PS51257">
    <property type="entry name" value="PROKAR_LIPOPROTEIN"/>
    <property type="match status" value="1"/>
</dbReference>
<keyword id="KW-0975">Bacterial flagellum</keyword>
<keyword id="KW-0998">Cell outer membrane</keyword>
<keyword id="KW-0449">Lipoprotein</keyword>
<keyword id="KW-0472">Membrane</keyword>
<keyword id="KW-0564">Palmitate</keyword>
<keyword id="KW-1185">Reference proteome</keyword>
<keyword id="KW-0732">Signal</keyword>
<sequence length="263" mass="28555">MKRLLCLLLLTTLTGCETLLIKNPSAQESEVTSATTNVDAVEGDKAKEEDSGIIDTLRGRNDPIAGDPAWAPIHPKEKPEHYAAATGSLFNVDHAQDMYDDTKPRGLGDIVTVMLAENTKAAKSADAELSKSNDSSMDPLQVGGQELQMGGQYNFSYELSNDNNFTGNTSANQSNSLSGSITVEVIEVLSNGNLLIRGEKWLTLNTGDEYIRLSGTIRPDDINFDNTIDSTRISNARIQYSGTGDQQDMQEPGFLARFFNVAL</sequence>
<proteinExistence type="inferred from homology"/>
<accession>Q5E3N0</accession>
<reference key="1">
    <citation type="journal article" date="2005" name="Proc. Natl. Acad. Sci. U.S.A.">
        <title>Complete genome sequence of Vibrio fischeri: a symbiotic bacterium with pathogenic congeners.</title>
        <authorList>
            <person name="Ruby E.G."/>
            <person name="Urbanowski M."/>
            <person name="Campbell J."/>
            <person name="Dunn A."/>
            <person name="Faini M."/>
            <person name="Gunsalus R."/>
            <person name="Lostroh P."/>
            <person name="Lupp C."/>
            <person name="McCann J."/>
            <person name="Millikan D."/>
            <person name="Schaefer A."/>
            <person name="Stabb E."/>
            <person name="Stevens A."/>
            <person name="Visick K."/>
            <person name="Whistler C."/>
            <person name="Greenberg E.P."/>
        </authorList>
    </citation>
    <scope>NUCLEOTIDE SEQUENCE [LARGE SCALE GENOMIC DNA]</scope>
    <source>
        <strain>ATCC 700601 / ES114</strain>
    </source>
</reference>
<comment type="function">
    <text evidence="1">Assembles around the rod to form the L-ring and probably protects the motor/basal body from shearing forces during rotation.</text>
</comment>
<comment type="subunit">
    <text evidence="1">The basal body constitutes a major portion of the flagellar organelle and consists of four rings (L,P,S, and M) mounted on a central rod.</text>
</comment>
<comment type="subcellular location">
    <subcellularLocation>
        <location evidence="1">Cell outer membrane</location>
        <topology evidence="1">Lipid-anchor</topology>
    </subcellularLocation>
    <subcellularLocation>
        <location evidence="1">Bacterial flagellum basal body</location>
    </subcellularLocation>
</comment>
<comment type="similarity">
    <text evidence="1">Belongs to the FlgH family.</text>
</comment>